<reference key="1">
    <citation type="journal article" date="2010" name="Genome Biol. Evol.">
        <title>Continuing evolution of Burkholderia mallei through genome reduction and large-scale rearrangements.</title>
        <authorList>
            <person name="Losada L."/>
            <person name="Ronning C.M."/>
            <person name="DeShazer D."/>
            <person name="Woods D."/>
            <person name="Fedorova N."/>
            <person name="Kim H.S."/>
            <person name="Shabalina S.A."/>
            <person name="Pearson T.R."/>
            <person name="Brinkac L."/>
            <person name="Tan P."/>
            <person name="Nandi T."/>
            <person name="Crabtree J."/>
            <person name="Badger J."/>
            <person name="Beckstrom-Sternberg S."/>
            <person name="Saqib M."/>
            <person name="Schutzer S.E."/>
            <person name="Keim P."/>
            <person name="Nierman W.C."/>
        </authorList>
    </citation>
    <scope>NUCLEOTIDE SEQUENCE [LARGE SCALE GENOMIC DNA]</scope>
    <source>
        <strain>SAVP1</strain>
    </source>
</reference>
<dbReference type="EMBL" id="CP000526">
    <property type="protein sequence ID" value="ABM51013.1"/>
    <property type="molecule type" value="Genomic_DNA"/>
</dbReference>
<dbReference type="RefSeq" id="WP_004194247.1">
    <property type="nucleotide sequence ID" value="NC_008785.1"/>
</dbReference>
<dbReference type="SMR" id="A1V053"/>
<dbReference type="GeneID" id="93061505"/>
<dbReference type="KEGG" id="bmv:BMASAVP1_A0255"/>
<dbReference type="HOGENOM" id="CLU_069054_5_3_4"/>
<dbReference type="GO" id="GO:0051537">
    <property type="term" value="F:2 iron, 2 sulfur cluster binding"/>
    <property type="evidence" value="ECO:0007669"/>
    <property type="project" value="TreeGrafter"/>
</dbReference>
<dbReference type="GO" id="GO:0051539">
    <property type="term" value="F:4 iron, 4 sulfur cluster binding"/>
    <property type="evidence" value="ECO:0007669"/>
    <property type="project" value="TreeGrafter"/>
</dbReference>
<dbReference type="GO" id="GO:0005506">
    <property type="term" value="F:iron ion binding"/>
    <property type="evidence" value="ECO:0007669"/>
    <property type="project" value="UniProtKB-UniRule"/>
</dbReference>
<dbReference type="GO" id="GO:0016226">
    <property type="term" value="P:iron-sulfur cluster assembly"/>
    <property type="evidence" value="ECO:0007669"/>
    <property type="project" value="UniProtKB-UniRule"/>
</dbReference>
<dbReference type="FunFam" id="2.60.300.12:FF:000002">
    <property type="entry name" value="Iron-sulfur cluster insertion protein ErpA"/>
    <property type="match status" value="1"/>
</dbReference>
<dbReference type="Gene3D" id="2.60.300.12">
    <property type="entry name" value="HesB-like domain"/>
    <property type="match status" value="1"/>
</dbReference>
<dbReference type="HAMAP" id="MF_01380">
    <property type="entry name" value="Fe_S_insert_ErpA"/>
    <property type="match status" value="1"/>
</dbReference>
<dbReference type="InterPro" id="IPR000361">
    <property type="entry name" value="FeS_biogenesis"/>
</dbReference>
<dbReference type="InterPro" id="IPR016092">
    <property type="entry name" value="FeS_cluster_insertion"/>
</dbReference>
<dbReference type="InterPro" id="IPR017870">
    <property type="entry name" value="FeS_cluster_insertion_CS"/>
</dbReference>
<dbReference type="InterPro" id="IPR023063">
    <property type="entry name" value="FeS_cluster_insertion_RrpA"/>
</dbReference>
<dbReference type="InterPro" id="IPR035903">
    <property type="entry name" value="HesB-like_dom_sf"/>
</dbReference>
<dbReference type="NCBIfam" id="TIGR00049">
    <property type="entry name" value="iron-sulfur cluster assembly accessory protein"/>
    <property type="match status" value="1"/>
</dbReference>
<dbReference type="NCBIfam" id="NF010147">
    <property type="entry name" value="PRK13623.1"/>
    <property type="match status" value="1"/>
</dbReference>
<dbReference type="PANTHER" id="PTHR43011">
    <property type="entry name" value="IRON-SULFUR CLUSTER ASSEMBLY 2 HOMOLOG, MITOCHONDRIAL"/>
    <property type="match status" value="1"/>
</dbReference>
<dbReference type="PANTHER" id="PTHR43011:SF1">
    <property type="entry name" value="IRON-SULFUR CLUSTER ASSEMBLY 2 HOMOLOG, MITOCHONDRIAL"/>
    <property type="match status" value="1"/>
</dbReference>
<dbReference type="Pfam" id="PF01521">
    <property type="entry name" value="Fe-S_biosyn"/>
    <property type="match status" value="1"/>
</dbReference>
<dbReference type="SUPFAM" id="SSF89360">
    <property type="entry name" value="HesB-like domain"/>
    <property type="match status" value="1"/>
</dbReference>
<dbReference type="PROSITE" id="PS01152">
    <property type="entry name" value="HESB"/>
    <property type="match status" value="1"/>
</dbReference>
<proteinExistence type="inferred from homology"/>
<sequence>MNAVTESAATTEMPAPFVFTDAAADKVKQLIDEEGNPDLKLRVFVQGGGCSGFQYGFTFDEEVNEDDTVLNKNGVVLLVDAMSYQYLVGAEIDYKDDLNGAQFVIKNPNATTTCGCGSSFSV</sequence>
<gene>
    <name evidence="1" type="primary">erpA</name>
    <name type="ordered locus">BMASAVP1_A0255</name>
</gene>
<evidence type="ECO:0000255" key="1">
    <source>
        <dbReference type="HAMAP-Rule" id="MF_01380"/>
    </source>
</evidence>
<name>ERPA_BURMS</name>
<protein>
    <recommendedName>
        <fullName evidence="1">Putative iron-sulfur cluster insertion protein ErpA</fullName>
    </recommendedName>
</protein>
<accession>A1V053</accession>
<comment type="function">
    <text evidence="1">Required for insertion of 4Fe-4S clusters.</text>
</comment>
<comment type="cofactor">
    <cofactor evidence="1">
        <name>iron-sulfur cluster</name>
        <dbReference type="ChEBI" id="CHEBI:30408"/>
    </cofactor>
    <text evidence="1">Binds 1 iron-sulfur cluster per subunit.</text>
</comment>
<comment type="subunit">
    <text evidence="1">Homodimer.</text>
</comment>
<comment type="similarity">
    <text evidence="1">Belongs to the HesB/IscA family.</text>
</comment>
<organism>
    <name type="scientific">Burkholderia mallei (strain SAVP1)</name>
    <dbReference type="NCBI Taxonomy" id="320388"/>
    <lineage>
        <taxon>Bacteria</taxon>
        <taxon>Pseudomonadati</taxon>
        <taxon>Pseudomonadota</taxon>
        <taxon>Betaproteobacteria</taxon>
        <taxon>Burkholderiales</taxon>
        <taxon>Burkholderiaceae</taxon>
        <taxon>Burkholderia</taxon>
        <taxon>pseudomallei group</taxon>
    </lineage>
</organism>
<feature type="chain" id="PRO_0000311460" description="Putative iron-sulfur cluster insertion protein ErpA">
    <location>
        <begin position="1"/>
        <end position="122"/>
    </location>
</feature>
<feature type="binding site" evidence="1">
    <location>
        <position position="50"/>
    </location>
    <ligand>
        <name>iron-sulfur cluster</name>
        <dbReference type="ChEBI" id="CHEBI:30408"/>
    </ligand>
</feature>
<feature type="binding site" evidence="1">
    <location>
        <position position="114"/>
    </location>
    <ligand>
        <name>iron-sulfur cluster</name>
        <dbReference type="ChEBI" id="CHEBI:30408"/>
    </ligand>
</feature>
<feature type="binding site" evidence="1">
    <location>
        <position position="116"/>
    </location>
    <ligand>
        <name>iron-sulfur cluster</name>
        <dbReference type="ChEBI" id="CHEBI:30408"/>
    </ligand>
</feature>
<keyword id="KW-0408">Iron</keyword>
<keyword id="KW-0411">Iron-sulfur</keyword>
<keyword id="KW-0479">Metal-binding</keyword>